<organism>
    <name type="scientific">Arabidopsis thaliana</name>
    <name type="common">Mouse-ear cress</name>
    <dbReference type="NCBI Taxonomy" id="3702"/>
    <lineage>
        <taxon>Eukaryota</taxon>
        <taxon>Viridiplantae</taxon>
        <taxon>Streptophyta</taxon>
        <taxon>Embryophyta</taxon>
        <taxon>Tracheophyta</taxon>
        <taxon>Spermatophyta</taxon>
        <taxon>Magnoliopsida</taxon>
        <taxon>eudicotyledons</taxon>
        <taxon>Gunneridae</taxon>
        <taxon>Pentapetalae</taxon>
        <taxon>rosids</taxon>
        <taxon>malvids</taxon>
        <taxon>Brassicales</taxon>
        <taxon>Brassicaceae</taxon>
        <taxon>Camelineae</taxon>
        <taxon>Arabidopsis</taxon>
    </lineage>
</organism>
<keyword id="KW-0880">Kelch repeat</keyword>
<keyword id="KW-1185">Reference proteome</keyword>
<keyword id="KW-0677">Repeat</keyword>
<protein>
    <recommendedName>
        <fullName>Putative F-box/kelch-repeat protein At3g27910</fullName>
    </recommendedName>
</protein>
<gene>
    <name type="ordered locus">At3g27910</name>
    <name type="ORF">K16N12.16</name>
</gene>
<feature type="chain" id="PRO_0000283231" description="Putative F-box/kelch-repeat protein At3g27910">
    <location>
        <begin position="1"/>
        <end position="384"/>
    </location>
</feature>
<feature type="domain" description="F-box" evidence="1">
    <location>
        <begin position="27"/>
        <end position="79"/>
    </location>
</feature>
<feature type="repeat" description="Kelch 1">
    <location>
        <begin position="138"/>
        <end position="184"/>
    </location>
</feature>
<feature type="repeat" description="Kelch 2">
    <location>
        <begin position="185"/>
        <end position="235"/>
    </location>
</feature>
<feature type="repeat" description="Kelch 3">
    <location>
        <begin position="237"/>
        <end position="274"/>
    </location>
</feature>
<feature type="repeat" description="Kelch 4">
    <location>
        <begin position="275"/>
        <end position="323"/>
    </location>
</feature>
<evidence type="ECO:0000255" key="1">
    <source>
        <dbReference type="PROSITE-ProRule" id="PRU00080"/>
    </source>
</evidence>
<evidence type="ECO:0000305" key="2"/>
<reference key="1">
    <citation type="journal article" date="2000" name="DNA Res.">
        <title>Structural analysis of Arabidopsis thaliana chromosome 3. II. Sequence features of the 4,251,695 bp regions covered by 90 P1, TAC and BAC clones.</title>
        <authorList>
            <person name="Kaneko T."/>
            <person name="Katoh T."/>
            <person name="Sato S."/>
            <person name="Nakamura Y."/>
            <person name="Asamizu E."/>
            <person name="Tabata S."/>
        </authorList>
    </citation>
    <scope>NUCLEOTIDE SEQUENCE [LARGE SCALE GENOMIC DNA]</scope>
    <source>
        <strain>cv. Columbia</strain>
    </source>
</reference>
<reference key="2">
    <citation type="journal article" date="2017" name="Plant J.">
        <title>Araport11: a complete reannotation of the Arabidopsis thaliana reference genome.</title>
        <authorList>
            <person name="Cheng C.Y."/>
            <person name="Krishnakumar V."/>
            <person name="Chan A.P."/>
            <person name="Thibaud-Nissen F."/>
            <person name="Schobel S."/>
            <person name="Town C.D."/>
        </authorList>
    </citation>
    <scope>GENOME REANNOTATION</scope>
    <source>
        <strain>cv. Columbia</strain>
    </source>
</reference>
<name>FBK71_ARATH</name>
<accession>Q9LK86</accession>
<accession>F4IXR9</accession>
<proteinExistence type="predicted"/>
<dbReference type="EMBL" id="AP000371">
    <property type="protein sequence ID" value="BAB02537.1"/>
    <property type="status" value="ALT_SEQ"/>
    <property type="molecule type" value="Genomic_DNA"/>
</dbReference>
<dbReference type="EMBL" id="CP002686">
    <property type="protein sequence ID" value="AEE77379.1"/>
    <property type="status" value="ALT_SEQ"/>
    <property type="molecule type" value="Genomic_DNA"/>
</dbReference>
<dbReference type="RefSeq" id="NP_189429.1">
    <property type="nucleotide sequence ID" value="NM_113707.2"/>
</dbReference>
<dbReference type="SMR" id="Q9LK86"/>
<dbReference type="STRING" id="3702.Q9LK86"/>
<dbReference type="PaxDb" id="3702-AT3G27910.1"/>
<dbReference type="GeneID" id="822414"/>
<dbReference type="KEGG" id="ath:AT3G27910"/>
<dbReference type="Araport" id="AT3G27910"/>
<dbReference type="TAIR" id="AT3G27910"/>
<dbReference type="eggNOG" id="KOG1072">
    <property type="taxonomic scope" value="Eukaryota"/>
</dbReference>
<dbReference type="InParanoid" id="Q9LK86"/>
<dbReference type="PRO" id="PR:Q9LK86"/>
<dbReference type="Proteomes" id="UP000006548">
    <property type="component" value="Chromosome 3"/>
</dbReference>
<dbReference type="ExpressionAtlas" id="Q9LK86">
    <property type="expression patterns" value="baseline and differential"/>
</dbReference>
<dbReference type="CDD" id="cd22152">
    <property type="entry name" value="F-box_AtAFR-like"/>
    <property type="match status" value="1"/>
</dbReference>
<dbReference type="Gene3D" id="2.120.10.80">
    <property type="entry name" value="Kelch-type beta propeller"/>
    <property type="match status" value="1"/>
</dbReference>
<dbReference type="InterPro" id="IPR036047">
    <property type="entry name" value="F-box-like_dom_sf"/>
</dbReference>
<dbReference type="InterPro" id="IPR050354">
    <property type="entry name" value="F-box/kelch-repeat_ARATH"/>
</dbReference>
<dbReference type="InterPro" id="IPR001810">
    <property type="entry name" value="F-box_dom"/>
</dbReference>
<dbReference type="InterPro" id="IPR015915">
    <property type="entry name" value="Kelch-typ_b-propeller"/>
</dbReference>
<dbReference type="InterPro" id="IPR006652">
    <property type="entry name" value="Kelch_1"/>
</dbReference>
<dbReference type="PANTHER" id="PTHR24414:SF70">
    <property type="entry name" value="F-BOX DOMAIN-CONTAINING PROTEIN"/>
    <property type="match status" value="1"/>
</dbReference>
<dbReference type="PANTHER" id="PTHR24414">
    <property type="entry name" value="F-BOX/KELCH-REPEAT PROTEIN SKIP4"/>
    <property type="match status" value="1"/>
</dbReference>
<dbReference type="Pfam" id="PF00646">
    <property type="entry name" value="F-box"/>
    <property type="match status" value="1"/>
</dbReference>
<dbReference type="Pfam" id="PF25210">
    <property type="entry name" value="Kelch_FKB95"/>
    <property type="match status" value="1"/>
</dbReference>
<dbReference type="SMART" id="SM00256">
    <property type="entry name" value="FBOX"/>
    <property type="match status" value="1"/>
</dbReference>
<dbReference type="SMART" id="SM00612">
    <property type="entry name" value="Kelch"/>
    <property type="match status" value="2"/>
</dbReference>
<dbReference type="SUPFAM" id="SSF81383">
    <property type="entry name" value="F-box domain"/>
    <property type="match status" value="1"/>
</dbReference>
<dbReference type="SUPFAM" id="SSF117281">
    <property type="entry name" value="Kelch motif"/>
    <property type="match status" value="1"/>
</dbReference>
<dbReference type="PROSITE" id="PS50181">
    <property type="entry name" value="FBOX"/>
    <property type="match status" value="1"/>
</dbReference>
<sequence>MTFVVSVNAANPTPKVKKPTVARSIPSPTSLPLPDEIIVNCFAYIPRCDYPSLSLVSKTFNRLITSIELNIVRSLFQRTENVLYVALRFSHEEDPIWYTLNQKPYKNKSNSCIHKLVPLPSCPSLPCWGSSVIAIGHKIYVFGGCINGDMTSNVFVIDCLHGTFQFLPSMRVPRGCAAFGIVDGKIYVIGGYNKADSLDNWVEVFDLEKQTWESFSGLCNEELSKITLKSVVMNKKIYIMDRGNGIVFDPKKGVWERDFLLDRDWVVGSCVIDNMLYTFGFDSVKRIYRVRVYDPSVRVWSFVKGIEDIPKMDGTLGSRMANHGGKLVILLNLDKNGGTELWCIKIALERRGQQGEIWGKILWYNLVLTLENSSTIVECFDITI</sequence>
<comment type="sequence caution" evidence="2">
    <conflict type="erroneous gene model prediction">
        <sequence resource="EMBL-CDS" id="AEE77379"/>
    </conflict>
</comment>
<comment type="sequence caution" evidence="2">
    <conflict type="frameshift">
        <sequence resource="EMBL-CDS" id="AEE77379"/>
    </conflict>
</comment>
<comment type="sequence caution" evidence="2">
    <conflict type="erroneous gene model prediction">
        <sequence resource="EMBL-CDS" id="BAB02537"/>
    </conflict>
</comment>
<comment type="sequence caution" evidence="2">
    <conflict type="frameshift">
        <sequence resource="EMBL-CDS" id="BAB02537"/>
    </conflict>
</comment>